<name>WNT2_ORNAN</name>
<sequence length="361" mass="40114">MNASVLGLCLSGPLVLLLAWLAPPVTSSWWYMRAAGSSRVMCDNVPGLVSRQRQLCHRHPEVMRSIGLGIAEWTAECQHQFRQHRWNCNTLDRDHSLFGRVLLRSSREAAFVYAISSAGVVFAITRACSQGELKSCSCDPKKKGSAKDSKGTFDWGGCSDNIDYGIKFARAFVDAKERKGKDARALMNLHNNRAGRKAVKRFLKQECKCHGVSGSCTLRTCWLAMADFRKTGDYLWRKYNGAIQVVMNQDGTGFTVANKRFKKPTKNDLVYFENSPDYCIKDRDAGSLGTAGRVCNLTSRGMDSCEVMCCGRGYDTARVTRMTKCECKFHWCCAVRCQDCLEALDVHTCKAPSSASEGAPT</sequence>
<keyword id="KW-0217">Developmental protein</keyword>
<keyword id="KW-1015">Disulfide bond</keyword>
<keyword id="KW-0272">Extracellular matrix</keyword>
<keyword id="KW-0325">Glycoprotein</keyword>
<keyword id="KW-0449">Lipoprotein</keyword>
<keyword id="KW-1185">Reference proteome</keyword>
<keyword id="KW-0964">Secreted</keyword>
<keyword id="KW-0732">Signal</keyword>
<keyword id="KW-0879">Wnt signaling pathway</keyword>
<dbReference type="EMBL" id="DP000185">
    <property type="protein sequence ID" value="ABI93678.1"/>
    <property type="molecule type" value="Genomic_DNA"/>
</dbReference>
<dbReference type="RefSeq" id="NP_001229667.1">
    <property type="nucleotide sequence ID" value="NM_001242738.1"/>
</dbReference>
<dbReference type="SMR" id="Q07DZ8"/>
<dbReference type="FunCoup" id="Q07DZ8">
    <property type="interactions" value="354"/>
</dbReference>
<dbReference type="STRING" id="9258.ENSOANP00000013967"/>
<dbReference type="GlyCosmos" id="Q07DZ8">
    <property type="glycosylation" value="1 site, No reported glycans"/>
</dbReference>
<dbReference type="Ensembl" id="ENSOANT00000064799.1">
    <property type="protein sequence ID" value="ENSOANP00000049932.1"/>
    <property type="gene ID" value="ENSOANG00000008766.3"/>
</dbReference>
<dbReference type="GeneID" id="100077640"/>
<dbReference type="KEGG" id="oaa:100077640"/>
<dbReference type="CTD" id="7472"/>
<dbReference type="eggNOG" id="KOG3913">
    <property type="taxonomic scope" value="Eukaryota"/>
</dbReference>
<dbReference type="GeneTree" id="ENSGT00940000159231"/>
<dbReference type="InParanoid" id="Q07DZ8"/>
<dbReference type="OMA" id="ITRMTKC"/>
<dbReference type="OrthoDB" id="5945655at2759"/>
<dbReference type="Proteomes" id="UP000002279">
    <property type="component" value="Chromosome 10"/>
</dbReference>
<dbReference type="Bgee" id="ENSOANG00000008766">
    <property type="expression patterns" value="Expressed in ovary and 6 other cell types or tissues"/>
</dbReference>
<dbReference type="GO" id="GO:0005737">
    <property type="term" value="C:cytoplasm"/>
    <property type="evidence" value="ECO:0007669"/>
    <property type="project" value="Ensembl"/>
</dbReference>
<dbReference type="GO" id="GO:0005615">
    <property type="term" value="C:extracellular space"/>
    <property type="evidence" value="ECO:0000318"/>
    <property type="project" value="GO_Central"/>
</dbReference>
<dbReference type="GO" id="GO:0005125">
    <property type="term" value="F:cytokine activity"/>
    <property type="evidence" value="ECO:0000318"/>
    <property type="project" value="GO_Central"/>
</dbReference>
<dbReference type="GO" id="GO:0005109">
    <property type="term" value="F:frizzled binding"/>
    <property type="evidence" value="ECO:0000318"/>
    <property type="project" value="GO_Central"/>
</dbReference>
<dbReference type="GO" id="GO:0055009">
    <property type="term" value="P:atrial cardiac muscle tissue morphogenesis"/>
    <property type="evidence" value="ECO:0007669"/>
    <property type="project" value="Ensembl"/>
</dbReference>
<dbReference type="GO" id="GO:0060070">
    <property type="term" value="P:canonical Wnt signaling pathway"/>
    <property type="evidence" value="ECO:0000318"/>
    <property type="project" value="GO_Central"/>
</dbReference>
<dbReference type="GO" id="GO:0060317">
    <property type="term" value="P:cardiac epithelial to mesenchymal transition"/>
    <property type="evidence" value="ECO:0007669"/>
    <property type="project" value="Ensembl"/>
</dbReference>
<dbReference type="GO" id="GO:0060038">
    <property type="term" value="P:cardiac muscle cell proliferation"/>
    <property type="evidence" value="ECO:0007669"/>
    <property type="project" value="Ensembl"/>
</dbReference>
<dbReference type="GO" id="GO:0045165">
    <property type="term" value="P:cell fate commitment"/>
    <property type="evidence" value="ECO:0000318"/>
    <property type="project" value="GO_Central"/>
</dbReference>
<dbReference type="GO" id="GO:0033278">
    <property type="term" value="P:cell proliferation in midbrain"/>
    <property type="evidence" value="ECO:0007669"/>
    <property type="project" value="Ensembl"/>
</dbReference>
<dbReference type="GO" id="GO:0007267">
    <property type="term" value="P:cell-cell signaling"/>
    <property type="evidence" value="ECO:0007669"/>
    <property type="project" value="Ensembl"/>
</dbReference>
<dbReference type="GO" id="GO:0071560">
    <property type="term" value="P:cellular response to transforming growth factor beta stimulus"/>
    <property type="evidence" value="ECO:0007669"/>
    <property type="project" value="Ensembl"/>
</dbReference>
<dbReference type="GO" id="GO:0060502">
    <property type="term" value="P:epithelial cell proliferation involved in lung morphogenesis"/>
    <property type="evidence" value="ECO:0007669"/>
    <property type="project" value="Ensembl"/>
</dbReference>
<dbReference type="GO" id="GO:0060492">
    <property type="term" value="P:lung induction"/>
    <property type="evidence" value="ECO:0007669"/>
    <property type="project" value="Ensembl"/>
</dbReference>
<dbReference type="GO" id="GO:0061180">
    <property type="term" value="P:mammary gland epithelium development"/>
    <property type="evidence" value="ECO:0007669"/>
    <property type="project" value="Ensembl"/>
</dbReference>
<dbReference type="GO" id="GO:0010463">
    <property type="term" value="P:mesenchymal cell proliferation"/>
    <property type="evidence" value="ECO:0007669"/>
    <property type="project" value="Ensembl"/>
</dbReference>
<dbReference type="GO" id="GO:1904948">
    <property type="term" value="P:midbrain dopaminergic neuron differentiation"/>
    <property type="evidence" value="ECO:0007669"/>
    <property type="project" value="Ensembl"/>
</dbReference>
<dbReference type="GO" id="GO:0030182">
    <property type="term" value="P:neuron differentiation"/>
    <property type="evidence" value="ECO:0000318"/>
    <property type="project" value="GO_Central"/>
</dbReference>
<dbReference type="GO" id="GO:0060045">
    <property type="term" value="P:positive regulation of cardiac muscle cell proliferation"/>
    <property type="evidence" value="ECO:0007669"/>
    <property type="project" value="Ensembl"/>
</dbReference>
<dbReference type="GO" id="GO:0060501">
    <property type="term" value="P:positive regulation of epithelial cell proliferation involved in lung morphogenesis"/>
    <property type="evidence" value="ECO:0007669"/>
    <property type="project" value="Ensembl"/>
</dbReference>
<dbReference type="GO" id="GO:0048146">
    <property type="term" value="P:positive regulation of fibroblast proliferation"/>
    <property type="evidence" value="ECO:0007669"/>
    <property type="project" value="Ensembl"/>
</dbReference>
<dbReference type="GO" id="GO:0002053">
    <property type="term" value="P:positive regulation of mesenchymal cell proliferation"/>
    <property type="evidence" value="ECO:0007669"/>
    <property type="project" value="Ensembl"/>
</dbReference>
<dbReference type="GO" id="GO:0050769">
    <property type="term" value="P:positive regulation of neurogenesis"/>
    <property type="evidence" value="ECO:0007669"/>
    <property type="project" value="Ensembl"/>
</dbReference>
<dbReference type="GO" id="GO:0045944">
    <property type="term" value="P:positive regulation of transcription by RNA polymerase II"/>
    <property type="evidence" value="ECO:0007669"/>
    <property type="project" value="Ensembl"/>
</dbReference>
<dbReference type="CDD" id="cd19345">
    <property type="entry name" value="Wnt_Wnt2"/>
    <property type="match status" value="1"/>
</dbReference>
<dbReference type="FunFam" id="3.30.2460.20:FF:000001">
    <property type="entry name" value="Wnt homolog"/>
    <property type="match status" value="1"/>
</dbReference>
<dbReference type="Gene3D" id="3.30.2460.20">
    <property type="match status" value="1"/>
</dbReference>
<dbReference type="InterPro" id="IPR005817">
    <property type="entry name" value="Wnt"/>
</dbReference>
<dbReference type="InterPro" id="IPR009140">
    <property type="entry name" value="Wnt2"/>
</dbReference>
<dbReference type="InterPro" id="IPR043158">
    <property type="entry name" value="Wnt_C"/>
</dbReference>
<dbReference type="InterPro" id="IPR018161">
    <property type="entry name" value="Wnt_CS"/>
</dbReference>
<dbReference type="PANTHER" id="PTHR12027:SF86">
    <property type="entry name" value="PROTEIN WNT-2"/>
    <property type="match status" value="1"/>
</dbReference>
<dbReference type="PANTHER" id="PTHR12027">
    <property type="entry name" value="WNT RELATED"/>
    <property type="match status" value="1"/>
</dbReference>
<dbReference type="Pfam" id="PF00110">
    <property type="entry name" value="wnt"/>
    <property type="match status" value="1"/>
</dbReference>
<dbReference type="PRINTS" id="PR01842">
    <property type="entry name" value="WNT2PROTEIN"/>
</dbReference>
<dbReference type="PRINTS" id="PR01349">
    <property type="entry name" value="WNTPROTEIN"/>
</dbReference>
<dbReference type="SMART" id="SM00097">
    <property type="entry name" value="WNT1"/>
    <property type="match status" value="1"/>
</dbReference>
<dbReference type="PROSITE" id="PS00246">
    <property type="entry name" value="WNT1"/>
    <property type="match status" value="1"/>
</dbReference>
<protein>
    <recommendedName>
        <fullName>Protein Wnt-2</fullName>
    </recommendedName>
</protein>
<reference key="1">
    <citation type="submission" date="2006-09" db="EMBL/GenBank/DDBJ databases">
        <title>NISC comparative sequencing initiative.</title>
        <authorList>
            <person name="Antonellis A."/>
            <person name="Ayele K."/>
            <person name="Benjamin B."/>
            <person name="Blakesley R.W."/>
            <person name="Boakye A."/>
            <person name="Bouffard G.G."/>
            <person name="Brinkley C."/>
            <person name="Brooks S."/>
            <person name="Chu G."/>
            <person name="Coleman H."/>
            <person name="Engle J."/>
            <person name="Gestole M."/>
            <person name="Greene A."/>
            <person name="Guan X."/>
            <person name="Gupta J."/>
            <person name="Haghighi P."/>
            <person name="Han J."/>
            <person name="Hansen N."/>
            <person name="Ho S.-L."/>
            <person name="Hu P."/>
            <person name="Hunter G."/>
            <person name="Hurle B."/>
            <person name="Idol J.R."/>
            <person name="Kwong P."/>
            <person name="Laric P."/>
            <person name="Larson S."/>
            <person name="Lee-Lin S.-Q."/>
            <person name="Legaspi R."/>
            <person name="Madden M."/>
            <person name="Maduro Q.L."/>
            <person name="Maduro V.B."/>
            <person name="Margulies E.H."/>
            <person name="Masiello C."/>
            <person name="Maskeri B."/>
            <person name="McDowell J."/>
            <person name="Mojidi H.A."/>
            <person name="Mullikin J.C."/>
            <person name="Oestreicher J.S."/>
            <person name="Park M."/>
            <person name="Portnoy M.E."/>
            <person name="Prasad A."/>
            <person name="Puri O."/>
            <person name="Reddix-Dugue N."/>
            <person name="Schandler K."/>
            <person name="Schueler M.G."/>
            <person name="Sison C."/>
            <person name="Stantripop S."/>
            <person name="Stephen E."/>
            <person name="Taye A."/>
            <person name="Thomas J.W."/>
            <person name="Thomas P.J."/>
            <person name="Tsipouri V."/>
            <person name="Ung L."/>
            <person name="Vogt J.L."/>
            <person name="Wetherby K.D."/>
            <person name="Young A."/>
            <person name="Green E.D."/>
        </authorList>
    </citation>
    <scope>NUCLEOTIDE SEQUENCE [LARGE SCALE GENOMIC DNA]</scope>
</reference>
<accession>Q07DZ8</accession>
<feature type="signal peptide" evidence="5">
    <location>
        <begin position="1"/>
        <end position="27"/>
    </location>
</feature>
<feature type="chain" id="PRO_0000260347" description="Protein Wnt-2">
    <location>
        <begin position="28"/>
        <end position="361"/>
    </location>
</feature>
<feature type="lipid moiety-binding region" description="O-palmitoleoyl serine; by PORCN" evidence="4">
    <location>
        <position position="213"/>
    </location>
</feature>
<feature type="glycosylation site" description="N-linked (GlcNAc...) asparagine" evidence="5">
    <location>
        <position position="296"/>
    </location>
</feature>
<feature type="disulfide bond" evidence="3">
    <location>
        <begin position="77"/>
        <end position="88"/>
    </location>
</feature>
<feature type="disulfide bond" evidence="3">
    <location>
        <begin position="128"/>
        <end position="136"/>
    </location>
</feature>
<feature type="disulfide bond" evidence="3">
    <location>
        <begin position="138"/>
        <end position="158"/>
    </location>
</feature>
<feature type="disulfide bond" evidence="3">
    <location>
        <begin position="207"/>
        <end position="221"/>
    </location>
</feature>
<feature type="disulfide bond" evidence="3">
    <location>
        <begin position="209"/>
        <end position="216"/>
    </location>
</feature>
<feature type="disulfide bond" evidence="3">
    <location>
        <begin position="279"/>
        <end position="310"/>
    </location>
</feature>
<feature type="disulfide bond" evidence="3">
    <location>
        <begin position="295"/>
        <end position="305"/>
    </location>
</feature>
<feature type="disulfide bond" evidence="3">
    <location>
        <begin position="309"/>
        <end position="349"/>
    </location>
</feature>
<feature type="disulfide bond" evidence="3">
    <location>
        <begin position="325"/>
        <end position="340"/>
    </location>
</feature>
<feature type="disulfide bond" evidence="3">
    <location>
        <begin position="327"/>
        <end position="337"/>
    </location>
</feature>
<feature type="disulfide bond" evidence="3">
    <location>
        <begin position="332"/>
        <end position="333"/>
    </location>
</feature>
<organism>
    <name type="scientific">Ornithorhynchus anatinus</name>
    <name type="common">Duckbill platypus</name>
    <dbReference type="NCBI Taxonomy" id="9258"/>
    <lineage>
        <taxon>Eukaryota</taxon>
        <taxon>Metazoa</taxon>
        <taxon>Chordata</taxon>
        <taxon>Craniata</taxon>
        <taxon>Vertebrata</taxon>
        <taxon>Euteleostomi</taxon>
        <taxon>Mammalia</taxon>
        <taxon>Monotremata</taxon>
        <taxon>Ornithorhynchidae</taxon>
        <taxon>Ornithorhynchus</taxon>
    </lineage>
</organism>
<gene>
    <name type="primary">WNT2</name>
</gene>
<evidence type="ECO:0000250" key="1"/>
<evidence type="ECO:0000250" key="2">
    <source>
        <dbReference type="UniProtKB" id="P27467"/>
    </source>
</evidence>
<evidence type="ECO:0000250" key="3">
    <source>
        <dbReference type="UniProtKB" id="P28026"/>
    </source>
</evidence>
<evidence type="ECO:0000250" key="4">
    <source>
        <dbReference type="UniProtKB" id="P56704"/>
    </source>
</evidence>
<evidence type="ECO:0000255" key="5"/>
<evidence type="ECO:0000305" key="6"/>
<proteinExistence type="inferred from homology"/>
<comment type="function">
    <text evidence="1">Ligand for members of the frizzled family of seven transmembrane receptors. Probable developmental protein. May be a signaling molecule which affects the development of discrete regions of tissues. Is likely to signal over only few cell diameters (By similarity).</text>
</comment>
<comment type="subcellular location">
    <subcellularLocation>
        <location evidence="1">Secreted</location>
        <location evidence="1">Extracellular space</location>
        <location evidence="1">Extracellular matrix</location>
    </subcellularLocation>
</comment>
<comment type="PTM">
    <text evidence="2 4">Palmitoleoylation is required for efficient binding to frizzled receptors. Depalmitoleoylation leads to Wnt signaling pathway inhibition.</text>
</comment>
<comment type="similarity">
    <text evidence="6">Belongs to the Wnt family.</text>
</comment>